<gene>
    <name evidence="1" type="primary">E6</name>
</gene>
<sequence>MATANAEQSIGPPEQAQVIQPPLPATITDLAALLEIPLDDCLVPCNFCGNFLTYLEICEFDEKRLSLIWKEYLVYACCRCCCTATATFEFNEFYESTVTGREIEDVTGKSIFDIDVRCQTCMKYLDAIEKLDICGRRRPFHLVRGSWKGICRLCKHFYNDW</sequence>
<reference key="1">
    <citation type="journal article" date="1992" name="Virology">
        <title>Differences in transforming activity and coded amino acid sequence among E6 genes of several papillomaviruses associated with epidermodysplasia verruciformis.</title>
        <authorList>
            <person name="Kiyono T."/>
            <person name="Hiraiwa A."/>
            <person name="Ishibashi M."/>
        </authorList>
    </citation>
    <scope>NUCLEOTIDE SEQUENCE [GENOMIC DNA]</scope>
</reference>
<reference key="2">
    <citation type="journal article" date="1994" name="Curr. Top. Microbiol. Immunol.">
        <title>Primer-directed sequencing of human papillomavirus types.</title>
        <authorList>
            <person name="Delius H."/>
            <person name="Hofmann B."/>
        </authorList>
    </citation>
    <scope>NUCLEOTIDE SEQUENCE [GENOMIC DNA]</scope>
</reference>
<name>VE6_HPV25</name>
<feature type="chain" id="PRO_0000133345" description="Protein E6">
    <location>
        <begin position="1"/>
        <end position="161"/>
    </location>
</feature>
<feature type="zinc finger region" evidence="1">
    <location>
        <begin position="45"/>
        <end position="81"/>
    </location>
</feature>
<feature type="zinc finger region" evidence="1">
    <location>
        <begin position="118"/>
        <end position="154"/>
    </location>
</feature>
<protein>
    <recommendedName>
        <fullName evidence="1">Protein E6</fullName>
    </recommendedName>
</protein>
<accession>P28833</accession>
<organismHost>
    <name type="scientific">Homo sapiens</name>
    <name type="common">Human</name>
    <dbReference type="NCBI Taxonomy" id="9606"/>
</organismHost>
<proteinExistence type="inferred from homology"/>
<keyword id="KW-0010">Activator</keyword>
<keyword id="KW-0238">DNA-binding</keyword>
<keyword id="KW-0244">Early protein</keyword>
<keyword id="KW-1035">Host cytoplasm</keyword>
<keyword id="KW-1048">Host nucleus</keyword>
<keyword id="KW-0945">Host-virus interaction</keyword>
<keyword id="KW-1090">Inhibition of host innate immune response by virus</keyword>
<keyword id="KW-0479">Metal-binding</keyword>
<keyword id="KW-1119">Modulation of host cell apoptosis by virus</keyword>
<keyword id="KW-0804">Transcription</keyword>
<keyword id="KW-0805">Transcription regulation</keyword>
<keyword id="KW-0899">Viral immunoevasion</keyword>
<keyword id="KW-0862">Zinc</keyword>
<keyword id="KW-0863">Zinc-finger</keyword>
<dbReference type="EMBL" id="D90264">
    <property type="protein sequence ID" value="BAA14311.1"/>
    <property type="molecule type" value="Genomic_DNA"/>
</dbReference>
<dbReference type="EMBL" id="X74471">
    <property type="protein sequence ID" value="CAA52524.1"/>
    <property type="molecule type" value="Genomic_DNA"/>
</dbReference>
<dbReference type="PIR" id="S36491">
    <property type="entry name" value="S36491"/>
</dbReference>
<dbReference type="SMR" id="P28833"/>
<dbReference type="Proteomes" id="UP000009162">
    <property type="component" value="Genome"/>
</dbReference>
<dbReference type="GO" id="GO:0030430">
    <property type="term" value="C:host cell cytoplasm"/>
    <property type="evidence" value="ECO:0007669"/>
    <property type="project" value="UniProtKB-SubCell"/>
</dbReference>
<dbReference type="GO" id="GO:0042025">
    <property type="term" value="C:host cell nucleus"/>
    <property type="evidence" value="ECO:0007669"/>
    <property type="project" value="UniProtKB-SubCell"/>
</dbReference>
<dbReference type="GO" id="GO:0003677">
    <property type="term" value="F:DNA binding"/>
    <property type="evidence" value="ECO:0007669"/>
    <property type="project" value="UniProtKB-UniRule"/>
</dbReference>
<dbReference type="GO" id="GO:0008270">
    <property type="term" value="F:zinc ion binding"/>
    <property type="evidence" value="ECO:0007669"/>
    <property type="project" value="UniProtKB-KW"/>
</dbReference>
<dbReference type="GO" id="GO:0006351">
    <property type="term" value="P:DNA-templated transcription"/>
    <property type="evidence" value="ECO:0007669"/>
    <property type="project" value="UniProtKB-UniRule"/>
</dbReference>
<dbReference type="GO" id="GO:0006355">
    <property type="term" value="P:regulation of DNA-templated transcription"/>
    <property type="evidence" value="ECO:0007669"/>
    <property type="project" value="UniProtKB-UniRule"/>
</dbReference>
<dbReference type="GO" id="GO:0052150">
    <property type="term" value="P:symbiont-mediated perturbation of host apoptosis"/>
    <property type="evidence" value="ECO:0007669"/>
    <property type="project" value="UniProtKB-KW"/>
</dbReference>
<dbReference type="GO" id="GO:0039648">
    <property type="term" value="P:symbiont-mediated perturbation of host ubiquitin-like protein modification"/>
    <property type="evidence" value="ECO:0007669"/>
    <property type="project" value="UniProtKB-UniRule"/>
</dbReference>
<dbReference type="GO" id="GO:0052170">
    <property type="term" value="P:symbiont-mediated suppression of host innate immune response"/>
    <property type="evidence" value="ECO:0007669"/>
    <property type="project" value="UniProtKB-KW"/>
</dbReference>
<dbReference type="GO" id="GO:0039502">
    <property type="term" value="P:symbiont-mediated suppression of host type I interferon-mediated signaling pathway"/>
    <property type="evidence" value="ECO:0007669"/>
    <property type="project" value="UniProtKB-UniRule"/>
</dbReference>
<dbReference type="Gene3D" id="3.30.240.40">
    <property type="entry name" value="E6 early regulatory protein"/>
    <property type="match status" value="2"/>
</dbReference>
<dbReference type="HAMAP" id="MF_04006">
    <property type="entry name" value="HPV_E6"/>
    <property type="match status" value="1"/>
</dbReference>
<dbReference type="InterPro" id="IPR001334">
    <property type="entry name" value="E6"/>
</dbReference>
<dbReference type="InterPro" id="IPR038575">
    <property type="entry name" value="E6_sf"/>
</dbReference>
<dbReference type="Pfam" id="PF00518">
    <property type="entry name" value="E6"/>
    <property type="match status" value="1"/>
</dbReference>
<dbReference type="SUPFAM" id="SSF161229">
    <property type="entry name" value="E6 C-terminal domain-like"/>
    <property type="match status" value="2"/>
</dbReference>
<organism>
    <name type="scientific">Human papillomavirus 25</name>
    <dbReference type="NCBI Taxonomy" id="10609"/>
    <lineage>
        <taxon>Viruses</taxon>
        <taxon>Monodnaviria</taxon>
        <taxon>Shotokuvirae</taxon>
        <taxon>Cossaviricota</taxon>
        <taxon>Papovaviricetes</taxon>
        <taxon>Zurhausenvirales</taxon>
        <taxon>Papillomaviridae</taxon>
        <taxon>Firstpapillomavirinae</taxon>
        <taxon>Betapapillomavirus</taxon>
        <taxon>Betapapillomavirus 1</taxon>
    </lineage>
</organism>
<evidence type="ECO:0000255" key="1">
    <source>
        <dbReference type="HAMAP-Rule" id="MF_04006"/>
    </source>
</evidence>
<evidence type="ECO:0000305" key="2"/>
<comment type="function">
    <text evidence="1">Plays a major role in the induction and maintenance of cellular transformation. E6 associates with host UBE3A/E6-AP ubiquitin-protein ligase and modulates its activity. Protects host keratinocytes from apoptosis by mediating the degradation of host BAK1. May also inhibit host immune response.</text>
</comment>
<comment type="subunit">
    <text evidence="1">Forms homodimers. Interacts with ubiquitin-protein ligase UBE3A/E6-AP; this interaction stimulates UBE3A ubiquitin activity. Interacts with host BAK1.</text>
</comment>
<comment type="subcellular location">
    <subcellularLocation>
        <location evidence="1">Host cytoplasm</location>
    </subcellularLocation>
    <subcellularLocation>
        <location evidence="1">Host nucleus</location>
    </subcellularLocation>
</comment>
<comment type="similarity">
    <text evidence="1 2">Belongs to the papillomaviridae E6 protein family.</text>
</comment>